<organism>
    <name type="scientific">Methanococcus maripaludis (strain C7 / ATCC BAA-1331)</name>
    <dbReference type="NCBI Taxonomy" id="426368"/>
    <lineage>
        <taxon>Archaea</taxon>
        <taxon>Methanobacteriati</taxon>
        <taxon>Methanobacteriota</taxon>
        <taxon>Methanomada group</taxon>
        <taxon>Methanococci</taxon>
        <taxon>Methanococcales</taxon>
        <taxon>Methanococcaceae</taxon>
        <taxon>Methanococcus</taxon>
    </lineage>
</organism>
<sequence>MKHLVTTALAYTNGPLHLGHARSTYIPADIYTRYLRLKGEEVVHVGGTDNHGVPITLTAEREGVKPIDIVDRYHNAIKADLDSLNVSFDTFGRTHSDIHIETAQEFYSKLKENGYIYEKEIEQFYCEKCDMYLADRYVEGICPFCEGEARGDHCEVCGRHLEPTELVNPYCIHCNSKPEIKRTTHYFFKLSAMQDVLKEYIENSPEMPEHVKNMALRWIEELHDWDVSRNIKWGVPIPGCDDQVMYVWIEAPIGYVSFTKQLGGIWEDYWLENTGDSKISHFIGKDITVHHAVFWPGILKGIGGYKMPNAVVSGGYLTLENKKMSTSKNWVVWVKDFIENFSSDYLRYFFMINAPLNRDTDFSWDDFQKRINTELIDIIGNFTHRTLVFTERKFGSTPIVDSNQLIDEDKKLISKCESTLNRVDSLIREYNFKDALMEIILLAKEGNAYFQGMAPWAIKDDERLKEVMYTCSVALKYIIYLLSSFMPEKTALLLEYMNEELDLEVRGNPLKKPKVIFTKVSDEDISRMKENLLAATKKAETKTDEKSKKVKSGEKMDIIDIDYFGNVDLRVGQILEVEEVPRSKKLYKIIADLGDEKRQIVSGLKGAYEAEELVGKKVIIICNLKPAKLCGVESQGMLLAAEDDSIVSLLALDRDLPVGSKIH</sequence>
<comment type="function">
    <text evidence="1">Is required not only for elongation of protein synthesis but also for the initiation of all mRNA translation through initiator tRNA(fMet) aminoacylation.</text>
</comment>
<comment type="catalytic activity">
    <reaction evidence="1">
        <text>tRNA(Met) + L-methionine + ATP = L-methionyl-tRNA(Met) + AMP + diphosphate</text>
        <dbReference type="Rhea" id="RHEA:13481"/>
        <dbReference type="Rhea" id="RHEA-COMP:9667"/>
        <dbReference type="Rhea" id="RHEA-COMP:9698"/>
        <dbReference type="ChEBI" id="CHEBI:30616"/>
        <dbReference type="ChEBI" id="CHEBI:33019"/>
        <dbReference type="ChEBI" id="CHEBI:57844"/>
        <dbReference type="ChEBI" id="CHEBI:78442"/>
        <dbReference type="ChEBI" id="CHEBI:78530"/>
        <dbReference type="ChEBI" id="CHEBI:456215"/>
        <dbReference type="EC" id="6.1.1.10"/>
    </reaction>
</comment>
<comment type="cofactor">
    <cofactor evidence="1">
        <name>Zn(2+)</name>
        <dbReference type="ChEBI" id="CHEBI:29105"/>
    </cofactor>
    <text evidence="1">Binds 1 zinc ion per subunit.</text>
</comment>
<comment type="subunit">
    <text evidence="1">Homodimer.</text>
</comment>
<comment type="subcellular location">
    <subcellularLocation>
        <location evidence="1">Cytoplasm</location>
    </subcellularLocation>
</comment>
<comment type="similarity">
    <text evidence="1">Belongs to the class-I aminoacyl-tRNA synthetase family. MetG type 1 subfamily.</text>
</comment>
<keyword id="KW-0030">Aminoacyl-tRNA synthetase</keyword>
<keyword id="KW-0067">ATP-binding</keyword>
<keyword id="KW-0963">Cytoplasm</keyword>
<keyword id="KW-0436">Ligase</keyword>
<keyword id="KW-0479">Metal-binding</keyword>
<keyword id="KW-0547">Nucleotide-binding</keyword>
<keyword id="KW-0648">Protein biosynthesis</keyword>
<keyword id="KW-0694">RNA-binding</keyword>
<keyword id="KW-0820">tRNA-binding</keyword>
<keyword id="KW-0862">Zinc</keyword>
<evidence type="ECO:0000255" key="1">
    <source>
        <dbReference type="HAMAP-Rule" id="MF_00098"/>
    </source>
</evidence>
<accession>A6VIW5</accession>
<name>SYM_METM7</name>
<protein>
    <recommendedName>
        <fullName evidence="1">Methionine--tRNA ligase</fullName>
        <ecNumber evidence="1">6.1.1.10</ecNumber>
    </recommendedName>
    <alternativeName>
        <fullName evidence="1">Methionyl-tRNA synthetase</fullName>
        <shortName evidence="1">MetRS</shortName>
    </alternativeName>
</protein>
<reference key="1">
    <citation type="submission" date="2007-06" db="EMBL/GenBank/DDBJ databases">
        <title>Complete sequence of Methanococcus maripaludis C7.</title>
        <authorList>
            <consortium name="US DOE Joint Genome Institute"/>
            <person name="Copeland A."/>
            <person name="Lucas S."/>
            <person name="Lapidus A."/>
            <person name="Barry K."/>
            <person name="Glavina del Rio T."/>
            <person name="Dalin E."/>
            <person name="Tice H."/>
            <person name="Pitluck S."/>
            <person name="Clum A."/>
            <person name="Schmutz J."/>
            <person name="Larimer F."/>
            <person name="Land M."/>
            <person name="Hauser L."/>
            <person name="Kyrpides N."/>
            <person name="Anderson I."/>
            <person name="Sieprawska-Lupa M."/>
            <person name="Whitman W.B."/>
            <person name="Richardson P."/>
        </authorList>
    </citation>
    <scope>NUCLEOTIDE SEQUENCE [LARGE SCALE GENOMIC DNA]</scope>
    <source>
        <strain>C7 / ATCC BAA-1331</strain>
    </source>
</reference>
<proteinExistence type="inferred from homology"/>
<feature type="chain" id="PRO_0000331943" description="Methionine--tRNA ligase">
    <location>
        <begin position="1"/>
        <end position="663"/>
    </location>
</feature>
<feature type="domain" description="tRNA-binding" evidence="1">
    <location>
        <begin position="563"/>
        <end position="663"/>
    </location>
</feature>
<feature type="short sequence motif" description="'HIGH' region">
    <location>
        <begin position="10"/>
        <end position="20"/>
    </location>
</feature>
<feature type="short sequence motif" description="'KMSKS' region">
    <location>
        <begin position="323"/>
        <end position="327"/>
    </location>
</feature>
<feature type="binding site" evidence="1">
    <location>
        <position position="142"/>
    </location>
    <ligand>
        <name>Zn(2+)</name>
        <dbReference type="ChEBI" id="CHEBI:29105"/>
    </ligand>
</feature>
<feature type="binding site" evidence="1">
    <location>
        <position position="145"/>
    </location>
    <ligand>
        <name>Zn(2+)</name>
        <dbReference type="ChEBI" id="CHEBI:29105"/>
    </ligand>
</feature>
<feature type="binding site" evidence="1">
    <location>
        <position position="154"/>
    </location>
    <ligand>
        <name>Zn(2+)</name>
        <dbReference type="ChEBI" id="CHEBI:29105"/>
    </ligand>
</feature>
<feature type="binding site" evidence="1">
    <location>
        <position position="157"/>
    </location>
    <ligand>
        <name>Zn(2+)</name>
        <dbReference type="ChEBI" id="CHEBI:29105"/>
    </ligand>
</feature>
<feature type="binding site" evidence="1">
    <location>
        <position position="326"/>
    </location>
    <ligand>
        <name>ATP</name>
        <dbReference type="ChEBI" id="CHEBI:30616"/>
    </ligand>
</feature>
<dbReference type="EC" id="6.1.1.10" evidence="1"/>
<dbReference type="EMBL" id="CP000745">
    <property type="protein sequence ID" value="ABR66391.1"/>
    <property type="molecule type" value="Genomic_DNA"/>
</dbReference>
<dbReference type="SMR" id="A6VIW5"/>
<dbReference type="STRING" id="426368.MmarC7_1328"/>
<dbReference type="KEGG" id="mmz:MmarC7_1328"/>
<dbReference type="eggNOG" id="arCOG00810">
    <property type="taxonomic scope" value="Archaea"/>
</dbReference>
<dbReference type="HOGENOM" id="CLU_009710_1_2_2"/>
<dbReference type="OrthoDB" id="371856at2157"/>
<dbReference type="GO" id="GO:0017101">
    <property type="term" value="C:aminoacyl-tRNA synthetase multienzyme complex"/>
    <property type="evidence" value="ECO:0007669"/>
    <property type="project" value="TreeGrafter"/>
</dbReference>
<dbReference type="GO" id="GO:0005829">
    <property type="term" value="C:cytosol"/>
    <property type="evidence" value="ECO:0007669"/>
    <property type="project" value="TreeGrafter"/>
</dbReference>
<dbReference type="GO" id="GO:0005524">
    <property type="term" value="F:ATP binding"/>
    <property type="evidence" value="ECO:0007669"/>
    <property type="project" value="UniProtKB-UniRule"/>
</dbReference>
<dbReference type="GO" id="GO:0046872">
    <property type="term" value="F:metal ion binding"/>
    <property type="evidence" value="ECO:0007669"/>
    <property type="project" value="UniProtKB-KW"/>
</dbReference>
<dbReference type="GO" id="GO:0004825">
    <property type="term" value="F:methionine-tRNA ligase activity"/>
    <property type="evidence" value="ECO:0007669"/>
    <property type="project" value="UniProtKB-UniRule"/>
</dbReference>
<dbReference type="GO" id="GO:0000049">
    <property type="term" value="F:tRNA binding"/>
    <property type="evidence" value="ECO:0007669"/>
    <property type="project" value="UniProtKB-KW"/>
</dbReference>
<dbReference type="GO" id="GO:0006431">
    <property type="term" value="P:methionyl-tRNA aminoacylation"/>
    <property type="evidence" value="ECO:0007669"/>
    <property type="project" value="UniProtKB-UniRule"/>
</dbReference>
<dbReference type="CDD" id="cd07957">
    <property type="entry name" value="Anticodon_Ia_Met"/>
    <property type="match status" value="1"/>
</dbReference>
<dbReference type="CDD" id="cd00814">
    <property type="entry name" value="MetRS_core"/>
    <property type="match status" value="1"/>
</dbReference>
<dbReference type="CDD" id="cd02800">
    <property type="entry name" value="tRNA_bind_EcMetRS_like"/>
    <property type="match status" value="1"/>
</dbReference>
<dbReference type="FunFam" id="2.20.28.20:FF:000001">
    <property type="entry name" value="Methionine--tRNA ligase"/>
    <property type="match status" value="1"/>
</dbReference>
<dbReference type="FunFam" id="2.40.50.140:FF:000042">
    <property type="entry name" value="Methionine--tRNA ligase"/>
    <property type="match status" value="1"/>
</dbReference>
<dbReference type="Gene3D" id="3.40.50.620">
    <property type="entry name" value="HUPs"/>
    <property type="match status" value="1"/>
</dbReference>
<dbReference type="Gene3D" id="1.10.730.10">
    <property type="entry name" value="Isoleucyl-tRNA Synthetase, Domain 1"/>
    <property type="match status" value="1"/>
</dbReference>
<dbReference type="Gene3D" id="2.20.28.20">
    <property type="entry name" value="Methionyl-tRNA synthetase, Zn-domain"/>
    <property type="match status" value="1"/>
</dbReference>
<dbReference type="Gene3D" id="2.40.50.140">
    <property type="entry name" value="Nucleic acid-binding proteins"/>
    <property type="match status" value="1"/>
</dbReference>
<dbReference type="HAMAP" id="MF_00098">
    <property type="entry name" value="Met_tRNA_synth_type1"/>
    <property type="match status" value="1"/>
</dbReference>
<dbReference type="InterPro" id="IPR041872">
    <property type="entry name" value="Anticodon_Met"/>
</dbReference>
<dbReference type="InterPro" id="IPR004495">
    <property type="entry name" value="Met-tRNA-synth_bsu_C"/>
</dbReference>
<dbReference type="InterPro" id="IPR023458">
    <property type="entry name" value="Met-tRNA_ligase_1"/>
</dbReference>
<dbReference type="InterPro" id="IPR014758">
    <property type="entry name" value="Met-tRNA_synth"/>
</dbReference>
<dbReference type="InterPro" id="IPR015413">
    <property type="entry name" value="Methionyl/Leucyl_tRNA_Synth"/>
</dbReference>
<dbReference type="InterPro" id="IPR033911">
    <property type="entry name" value="MetRS_core"/>
</dbReference>
<dbReference type="InterPro" id="IPR029038">
    <property type="entry name" value="MetRS_Zn"/>
</dbReference>
<dbReference type="InterPro" id="IPR012340">
    <property type="entry name" value="NA-bd_OB-fold"/>
</dbReference>
<dbReference type="InterPro" id="IPR014729">
    <property type="entry name" value="Rossmann-like_a/b/a_fold"/>
</dbReference>
<dbReference type="InterPro" id="IPR002547">
    <property type="entry name" value="tRNA-bd_dom"/>
</dbReference>
<dbReference type="InterPro" id="IPR009080">
    <property type="entry name" value="tRNAsynth_Ia_anticodon-bd"/>
</dbReference>
<dbReference type="NCBIfam" id="TIGR00398">
    <property type="entry name" value="metG"/>
    <property type="match status" value="1"/>
</dbReference>
<dbReference type="NCBIfam" id="TIGR00399">
    <property type="entry name" value="metG_C_term"/>
    <property type="match status" value="1"/>
</dbReference>
<dbReference type="NCBIfam" id="NF001100">
    <property type="entry name" value="PRK00133.1"/>
    <property type="match status" value="1"/>
</dbReference>
<dbReference type="PANTHER" id="PTHR45765">
    <property type="entry name" value="METHIONINE--TRNA LIGASE"/>
    <property type="match status" value="1"/>
</dbReference>
<dbReference type="PANTHER" id="PTHR45765:SF1">
    <property type="entry name" value="METHIONINE--TRNA LIGASE, CYTOPLASMIC"/>
    <property type="match status" value="1"/>
</dbReference>
<dbReference type="Pfam" id="PF19303">
    <property type="entry name" value="Anticodon_3"/>
    <property type="match status" value="1"/>
</dbReference>
<dbReference type="Pfam" id="PF09334">
    <property type="entry name" value="tRNA-synt_1g"/>
    <property type="match status" value="1"/>
</dbReference>
<dbReference type="Pfam" id="PF01588">
    <property type="entry name" value="tRNA_bind"/>
    <property type="match status" value="1"/>
</dbReference>
<dbReference type="PRINTS" id="PR01041">
    <property type="entry name" value="TRNASYNTHMET"/>
</dbReference>
<dbReference type="SUPFAM" id="SSF47323">
    <property type="entry name" value="Anticodon-binding domain of a subclass of class I aminoacyl-tRNA synthetases"/>
    <property type="match status" value="1"/>
</dbReference>
<dbReference type="SUPFAM" id="SSF57770">
    <property type="entry name" value="Methionyl-tRNA synthetase (MetRS), Zn-domain"/>
    <property type="match status" value="1"/>
</dbReference>
<dbReference type="SUPFAM" id="SSF50249">
    <property type="entry name" value="Nucleic acid-binding proteins"/>
    <property type="match status" value="1"/>
</dbReference>
<dbReference type="SUPFAM" id="SSF52374">
    <property type="entry name" value="Nucleotidylyl transferase"/>
    <property type="match status" value="1"/>
</dbReference>
<dbReference type="PROSITE" id="PS50886">
    <property type="entry name" value="TRBD"/>
    <property type="match status" value="1"/>
</dbReference>
<gene>
    <name evidence="1" type="primary">metG</name>
    <name type="ordered locus">MmarC7_1328</name>
</gene>